<name>Y2139_METS5</name>
<gene>
    <name type="ordered locus">Msed_2139</name>
</gene>
<evidence type="ECO:0000255" key="1">
    <source>
        <dbReference type="HAMAP-Rule" id="MF_00055"/>
    </source>
</evidence>
<comment type="similarity">
    <text evidence="1">Belongs to the MEMO1 family.</text>
</comment>
<sequence>MKRRPAVAGSFYEDDSAQLRKRIEWAFHHPIGPGGIPSVGSTGSRSNPIFIVPHAGYIYSGPVAAHSYYYLAQEGKPDIVIILGPNHTGYGSQVSIWPGGDWETPLGSAQVNAQLVKELVSVSEVVDIDEKAHLYEHSIEVQLPFLQYFFDNLSILPVVILMQTPEIAEFVAEGIWRFIQRHSDKDIVVLASSDLNHYDPHDVTMTKDELVIRKIQDMDYKGLYKVVEEYDVTVCGYAPIMASLILAKKMHKKPYILKHATSGDTSGDKSSVVGYLATRFSD</sequence>
<keyword id="KW-1185">Reference proteome</keyword>
<feature type="chain" id="PRO_1000074978" description="MEMO1 family protein Msed_2139">
    <location>
        <begin position="1"/>
        <end position="282"/>
    </location>
</feature>
<proteinExistence type="inferred from homology"/>
<accession>A4YIM6</accession>
<protein>
    <recommendedName>
        <fullName evidence="1">MEMO1 family protein Msed_2139</fullName>
    </recommendedName>
</protein>
<dbReference type="EMBL" id="CP000682">
    <property type="protein sequence ID" value="ABP96278.1"/>
    <property type="molecule type" value="Genomic_DNA"/>
</dbReference>
<dbReference type="RefSeq" id="WP_012022065.1">
    <property type="nucleotide sequence ID" value="NC_009440.1"/>
</dbReference>
<dbReference type="SMR" id="A4YIM6"/>
<dbReference type="STRING" id="399549.Msed_2139"/>
<dbReference type="GeneID" id="91756679"/>
<dbReference type="KEGG" id="mse:Msed_2139"/>
<dbReference type="eggNOG" id="arCOG01728">
    <property type="taxonomic scope" value="Archaea"/>
</dbReference>
<dbReference type="HOGENOM" id="CLU_038085_2_0_2"/>
<dbReference type="Proteomes" id="UP000000242">
    <property type="component" value="Chromosome"/>
</dbReference>
<dbReference type="CDD" id="cd07361">
    <property type="entry name" value="MEMO_like"/>
    <property type="match status" value="1"/>
</dbReference>
<dbReference type="Gene3D" id="3.40.830.10">
    <property type="entry name" value="LigB-like"/>
    <property type="match status" value="1"/>
</dbReference>
<dbReference type="HAMAP" id="MF_00055">
    <property type="entry name" value="MEMO1"/>
    <property type="match status" value="1"/>
</dbReference>
<dbReference type="InterPro" id="IPR002737">
    <property type="entry name" value="MEMO1_fam"/>
</dbReference>
<dbReference type="NCBIfam" id="TIGR04336">
    <property type="entry name" value="AmmeMemoSam_B"/>
    <property type="match status" value="1"/>
</dbReference>
<dbReference type="PANTHER" id="PTHR11060">
    <property type="entry name" value="PROTEIN MEMO1"/>
    <property type="match status" value="1"/>
</dbReference>
<dbReference type="PANTHER" id="PTHR11060:SF0">
    <property type="entry name" value="PROTEIN MEMO1"/>
    <property type="match status" value="1"/>
</dbReference>
<dbReference type="Pfam" id="PF01875">
    <property type="entry name" value="Memo"/>
    <property type="match status" value="1"/>
</dbReference>
<organism>
    <name type="scientific">Metallosphaera sedula (strain ATCC 51363 / DSM 5348 / JCM 9185 / NBRC 15509 / TH2)</name>
    <dbReference type="NCBI Taxonomy" id="399549"/>
    <lineage>
        <taxon>Archaea</taxon>
        <taxon>Thermoproteota</taxon>
        <taxon>Thermoprotei</taxon>
        <taxon>Sulfolobales</taxon>
        <taxon>Sulfolobaceae</taxon>
        <taxon>Metallosphaera</taxon>
    </lineage>
</organism>
<reference key="1">
    <citation type="journal article" date="2008" name="Appl. Environ. Microbiol.">
        <title>The genome sequence of the metal-mobilizing, extremely thermoacidophilic archaeon Metallosphaera sedula provides insights into bioleaching-associated metabolism.</title>
        <authorList>
            <person name="Auernik K.S."/>
            <person name="Maezato Y."/>
            <person name="Blum P.H."/>
            <person name="Kelly R.M."/>
        </authorList>
    </citation>
    <scope>NUCLEOTIDE SEQUENCE [LARGE SCALE GENOMIC DNA]</scope>
    <source>
        <strain>ATCC 51363 / DSM 5348 / JCM 9185 / NBRC 15509 / TH2</strain>
    </source>
</reference>